<keyword id="KW-0150">Chloroplast</keyword>
<keyword id="KW-0238">DNA-binding</keyword>
<keyword id="KW-0597">Phosphoprotein</keyword>
<keyword id="KW-0934">Plastid</keyword>
<keyword id="KW-0804">Transcription</keyword>
<keyword id="KW-0805">Transcription regulation</keyword>
<keyword id="KW-0902">Two-component regulatory system</keyword>
<name>YCF27_PORAE</name>
<organism>
    <name type="scientific">Porphyridium aerugineum</name>
    <name type="common">Red microalga</name>
    <dbReference type="NCBI Taxonomy" id="2792"/>
    <lineage>
        <taxon>Eukaryota</taxon>
        <taxon>Rhodophyta</taxon>
        <taxon>Bangiophyceae</taxon>
        <taxon>Porphyridiales</taxon>
        <taxon>Porphyridiaceae</taxon>
        <taxon>Porphyridium</taxon>
    </lineage>
</organism>
<sequence>MQKEKILVIDDEASIRRILETRLSIIGYDVISAADGEEALSIFKREHPNLVVLDLMMPKLDGYGVCQELRKESDVPIIMLTALSDVSDRITGLELGADDYIVKPFSPKELEARIRSVLRRVDKASSNNNLPNSGIINIGFLKIDVNKHQVYKNNERVRLTGMEFSLLELLISKAGQPFSRATILQEVWGYTAERQVDTRVVDVHISRLRAKLEDDPSNPDLILTARGTGYLFQRLNDSIV</sequence>
<feature type="chain" id="PRO_0000081352" description="Probable transcriptional regulator ycf27">
    <location>
        <begin position="1"/>
        <end position="240"/>
    </location>
</feature>
<feature type="domain" description="Response regulatory" evidence="2">
    <location>
        <begin position="5"/>
        <end position="118"/>
    </location>
</feature>
<feature type="DNA-binding region" description="H-T-H motif" evidence="1">
    <location>
        <begin position="74"/>
        <end position="92"/>
    </location>
</feature>
<feature type="DNA-binding region" description="OmpR/PhoB-type" evidence="3">
    <location>
        <begin position="133"/>
        <end position="234"/>
    </location>
</feature>
<feature type="modified residue" description="4-aspartylphosphate" evidence="2">
    <location>
        <position position="54"/>
    </location>
</feature>
<proteinExistence type="inferred from homology"/>
<gene>
    <name type="primary">ycf27</name>
    <name type="synonym">ompR</name>
</gene>
<reference key="1">
    <citation type="journal article" date="1992" name="Plant Mol. Biol.">
        <title>An equivalent to bacterial ompR genes is encoded on the plastid genome of red algae.</title>
        <authorList>
            <person name="Kessler U."/>
            <person name="Maid U."/>
            <person name="Zetsche K."/>
        </authorList>
    </citation>
    <scope>NUCLEOTIDE SEQUENCE [GENOMIC DNA]</scope>
    <source>
        <strain>1380-2</strain>
    </source>
</reference>
<evidence type="ECO:0000250" key="1"/>
<evidence type="ECO:0000255" key="2">
    <source>
        <dbReference type="PROSITE-ProRule" id="PRU00169"/>
    </source>
</evidence>
<evidence type="ECO:0000255" key="3">
    <source>
        <dbReference type="PROSITE-ProRule" id="PRU01091"/>
    </source>
</evidence>
<dbReference type="EMBL" id="X62579">
    <property type="protein sequence ID" value="CAA44464.1"/>
    <property type="molecule type" value="Genomic_DNA"/>
</dbReference>
<dbReference type="PIR" id="S20860">
    <property type="entry name" value="S20860"/>
</dbReference>
<dbReference type="RefSeq" id="YP_010330100.1">
    <property type="nucleotide sequence ID" value="NC_062300.1"/>
</dbReference>
<dbReference type="SMR" id="P28835"/>
<dbReference type="GeneID" id="71712528"/>
<dbReference type="GO" id="GO:0009507">
    <property type="term" value="C:chloroplast"/>
    <property type="evidence" value="ECO:0007669"/>
    <property type="project" value="UniProtKB-SubCell"/>
</dbReference>
<dbReference type="GO" id="GO:0005829">
    <property type="term" value="C:cytosol"/>
    <property type="evidence" value="ECO:0007669"/>
    <property type="project" value="TreeGrafter"/>
</dbReference>
<dbReference type="GO" id="GO:0032993">
    <property type="term" value="C:protein-DNA complex"/>
    <property type="evidence" value="ECO:0007669"/>
    <property type="project" value="TreeGrafter"/>
</dbReference>
<dbReference type="GO" id="GO:0000156">
    <property type="term" value="F:phosphorelay response regulator activity"/>
    <property type="evidence" value="ECO:0007669"/>
    <property type="project" value="TreeGrafter"/>
</dbReference>
<dbReference type="GO" id="GO:0000976">
    <property type="term" value="F:transcription cis-regulatory region binding"/>
    <property type="evidence" value="ECO:0007669"/>
    <property type="project" value="TreeGrafter"/>
</dbReference>
<dbReference type="GO" id="GO:0006355">
    <property type="term" value="P:regulation of DNA-templated transcription"/>
    <property type="evidence" value="ECO:0007669"/>
    <property type="project" value="InterPro"/>
</dbReference>
<dbReference type="CDD" id="cd17574">
    <property type="entry name" value="REC_OmpR"/>
    <property type="match status" value="1"/>
</dbReference>
<dbReference type="CDD" id="cd00383">
    <property type="entry name" value="trans_reg_C"/>
    <property type="match status" value="1"/>
</dbReference>
<dbReference type="FunFam" id="3.40.50.2300:FF:000001">
    <property type="entry name" value="DNA-binding response regulator PhoB"/>
    <property type="match status" value="1"/>
</dbReference>
<dbReference type="Gene3D" id="3.40.50.2300">
    <property type="match status" value="1"/>
</dbReference>
<dbReference type="Gene3D" id="6.10.250.690">
    <property type="match status" value="1"/>
</dbReference>
<dbReference type="Gene3D" id="1.10.10.10">
    <property type="entry name" value="Winged helix-like DNA-binding domain superfamily/Winged helix DNA-binding domain"/>
    <property type="match status" value="1"/>
</dbReference>
<dbReference type="InterPro" id="IPR011006">
    <property type="entry name" value="CheY-like_superfamily"/>
</dbReference>
<dbReference type="InterPro" id="IPR001867">
    <property type="entry name" value="OmpR/PhoB-type_DNA-bd"/>
</dbReference>
<dbReference type="InterPro" id="IPR001789">
    <property type="entry name" value="Sig_transdc_resp-reg_receiver"/>
</dbReference>
<dbReference type="InterPro" id="IPR039420">
    <property type="entry name" value="WalR-like"/>
</dbReference>
<dbReference type="InterPro" id="IPR036388">
    <property type="entry name" value="WH-like_DNA-bd_sf"/>
</dbReference>
<dbReference type="NCBIfam" id="NF045944">
    <property type="entry name" value="ResRegRpaBCyano"/>
    <property type="match status" value="1"/>
</dbReference>
<dbReference type="PANTHER" id="PTHR48111:SF65">
    <property type="entry name" value="OMPR SUBFAMILY"/>
    <property type="match status" value="1"/>
</dbReference>
<dbReference type="PANTHER" id="PTHR48111">
    <property type="entry name" value="REGULATOR OF RPOS"/>
    <property type="match status" value="1"/>
</dbReference>
<dbReference type="Pfam" id="PF00072">
    <property type="entry name" value="Response_reg"/>
    <property type="match status" value="1"/>
</dbReference>
<dbReference type="Pfam" id="PF00486">
    <property type="entry name" value="Trans_reg_C"/>
    <property type="match status" value="1"/>
</dbReference>
<dbReference type="SMART" id="SM00448">
    <property type="entry name" value="REC"/>
    <property type="match status" value="1"/>
</dbReference>
<dbReference type="SMART" id="SM00862">
    <property type="entry name" value="Trans_reg_C"/>
    <property type="match status" value="1"/>
</dbReference>
<dbReference type="SUPFAM" id="SSF52172">
    <property type="entry name" value="CheY-like"/>
    <property type="match status" value="1"/>
</dbReference>
<dbReference type="PROSITE" id="PS51755">
    <property type="entry name" value="OMPR_PHOB"/>
    <property type="match status" value="1"/>
</dbReference>
<dbReference type="PROSITE" id="PS50110">
    <property type="entry name" value="RESPONSE_REGULATORY"/>
    <property type="match status" value="1"/>
</dbReference>
<geneLocation type="chloroplast"/>
<protein>
    <recommendedName>
        <fullName>Probable transcriptional regulator ycf27</fullName>
    </recommendedName>
    <alternativeName>
        <fullName>OmpR-like protein</fullName>
    </alternativeName>
</protein>
<accession>P28835</accession>
<comment type="function">
    <text>Probable promoter-specific protein mediating the interaction between DNA and RNA polymerase.</text>
</comment>
<comment type="subcellular location">
    <subcellularLocation>
        <location>Plastid</location>
        <location>Chloroplast</location>
    </subcellularLocation>
</comment>